<comment type="function">
    <text evidence="1">Bifunctional serine/threonine kinase and phosphorylase involved in the regulation of the pyruvate, phosphate dikinase (PPDK) by catalyzing its phosphorylation/dephosphorylation.</text>
</comment>
<comment type="catalytic activity">
    <reaction evidence="1">
        <text>N(tele)-phospho-L-histidyl/L-threonyl-[pyruvate, phosphate dikinase] + ADP = N(tele)-phospho-L-histidyl/O-phospho-L-threonyl-[pyruvate, phosphate dikinase] + AMP + H(+)</text>
        <dbReference type="Rhea" id="RHEA:43692"/>
        <dbReference type="Rhea" id="RHEA-COMP:10650"/>
        <dbReference type="Rhea" id="RHEA-COMP:10651"/>
        <dbReference type="ChEBI" id="CHEBI:15378"/>
        <dbReference type="ChEBI" id="CHEBI:30013"/>
        <dbReference type="ChEBI" id="CHEBI:61977"/>
        <dbReference type="ChEBI" id="CHEBI:83586"/>
        <dbReference type="ChEBI" id="CHEBI:456215"/>
        <dbReference type="ChEBI" id="CHEBI:456216"/>
        <dbReference type="EC" id="2.7.11.32"/>
    </reaction>
</comment>
<comment type="catalytic activity">
    <reaction evidence="1">
        <text>N(tele)-phospho-L-histidyl/O-phospho-L-threonyl-[pyruvate, phosphate dikinase] + phosphate + H(+) = N(tele)-phospho-L-histidyl/L-threonyl-[pyruvate, phosphate dikinase] + diphosphate</text>
        <dbReference type="Rhea" id="RHEA:43696"/>
        <dbReference type="Rhea" id="RHEA-COMP:10650"/>
        <dbReference type="Rhea" id="RHEA-COMP:10651"/>
        <dbReference type="ChEBI" id="CHEBI:15378"/>
        <dbReference type="ChEBI" id="CHEBI:30013"/>
        <dbReference type="ChEBI" id="CHEBI:33019"/>
        <dbReference type="ChEBI" id="CHEBI:43474"/>
        <dbReference type="ChEBI" id="CHEBI:61977"/>
        <dbReference type="ChEBI" id="CHEBI:83586"/>
        <dbReference type="EC" id="2.7.4.27"/>
    </reaction>
</comment>
<comment type="similarity">
    <text evidence="1">Belongs to the pyruvate, phosphate/water dikinase regulatory protein family. PDRP subfamily.</text>
</comment>
<proteinExistence type="inferred from homology"/>
<reference key="1">
    <citation type="journal article" date="2009" name="Appl. Environ. Microbiol.">
        <title>Genome analysis of the meat starter culture bacterium Staphylococcus carnosus TM300.</title>
        <authorList>
            <person name="Rosenstein R."/>
            <person name="Nerz C."/>
            <person name="Biswas L."/>
            <person name="Resch A."/>
            <person name="Raddatz G."/>
            <person name="Schuster S.C."/>
            <person name="Goetz F."/>
        </authorList>
    </citation>
    <scope>NUCLEOTIDE SEQUENCE [LARGE SCALE GENOMIC DNA]</scope>
    <source>
        <strain>TM300</strain>
    </source>
</reference>
<sequence length="276" mass="31460">MQKIKIIIASDSVGETAEQVAKACVSQFNSKNFKSEIVRYPYIETIENVDEVIEIAKENELNIVVFTLVKPDIKQYMEERLAENKIKHVDIMGPLMSILTDKIDEQPYCEPGIVHKLDEAYFKKIEAIEFAVKYDDGKDPKGLPKADIVLIGISRTSKTPLSQFLAHKRYKVMNIPIVPEINPPEALFEIDPKKCIALKISEEKLNKIRKERLKQLGLGDSARYATGQRIQEELEYFDNIVNKIGCPVIDVSDKAIEETANDIMYIIEQNKTNKSE</sequence>
<name>PDRP_STACT</name>
<organism>
    <name type="scientific">Staphylococcus carnosus (strain TM300)</name>
    <dbReference type="NCBI Taxonomy" id="396513"/>
    <lineage>
        <taxon>Bacteria</taxon>
        <taxon>Bacillati</taxon>
        <taxon>Bacillota</taxon>
        <taxon>Bacilli</taxon>
        <taxon>Bacillales</taxon>
        <taxon>Staphylococcaceae</taxon>
        <taxon>Staphylococcus</taxon>
    </lineage>
</organism>
<accession>B9DNM2</accession>
<evidence type="ECO:0000255" key="1">
    <source>
        <dbReference type="HAMAP-Rule" id="MF_00921"/>
    </source>
</evidence>
<dbReference type="EC" id="2.7.11.32" evidence="1"/>
<dbReference type="EC" id="2.7.4.27" evidence="1"/>
<dbReference type="EMBL" id="AM295250">
    <property type="protein sequence ID" value="CAL28092.1"/>
    <property type="molecule type" value="Genomic_DNA"/>
</dbReference>
<dbReference type="RefSeq" id="WP_015900433.1">
    <property type="nucleotide sequence ID" value="NC_012121.1"/>
</dbReference>
<dbReference type="SMR" id="B9DNM2"/>
<dbReference type="GeneID" id="93793610"/>
<dbReference type="KEGG" id="sca:SCA_1185"/>
<dbReference type="eggNOG" id="COG1806">
    <property type="taxonomic scope" value="Bacteria"/>
</dbReference>
<dbReference type="HOGENOM" id="CLU_046206_2_1_9"/>
<dbReference type="OrthoDB" id="9782201at2"/>
<dbReference type="BioCyc" id="SCAR396513:SCA_RS05935-MONOMER"/>
<dbReference type="Proteomes" id="UP000000444">
    <property type="component" value="Chromosome"/>
</dbReference>
<dbReference type="GO" id="GO:0043531">
    <property type="term" value="F:ADP binding"/>
    <property type="evidence" value="ECO:0007669"/>
    <property type="project" value="UniProtKB-UniRule"/>
</dbReference>
<dbReference type="GO" id="GO:0005524">
    <property type="term" value="F:ATP binding"/>
    <property type="evidence" value="ECO:0007669"/>
    <property type="project" value="InterPro"/>
</dbReference>
<dbReference type="GO" id="GO:0016776">
    <property type="term" value="F:phosphotransferase activity, phosphate group as acceptor"/>
    <property type="evidence" value="ECO:0007669"/>
    <property type="project" value="UniProtKB-UniRule"/>
</dbReference>
<dbReference type="GO" id="GO:0004674">
    <property type="term" value="F:protein serine/threonine kinase activity"/>
    <property type="evidence" value="ECO:0007669"/>
    <property type="project" value="UniProtKB-UniRule"/>
</dbReference>
<dbReference type="HAMAP" id="MF_00921">
    <property type="entry name" value="PDRP"/>
    <property type="match status" value="1"/>
</dbReference>
<dbReference type="InterPro" id="IPR005177">
    <property type="entry name" value="Kinase-pyrophosphorylase"/>
</dbReference>
<dbReference type="InterPro" id="IPR026565">
    <property type="entry name" value="PPDK_reg"/>
</dbReference>
<dbReference type="NCBIfam" id="NF003742">
    <property type="entry name" value="PRK05339.1"/>
    <property type="match status" value="1"/>
</dbReference>
<dbReference type="PANTHER" id="PTHR31756">
    <property type="entry name" value="PYRUVATE, PHOSPHATE DIKINASE REGULATORY PROTEIN 1, CHLOROPLASTIC"/>
    <property type="match status" value="1"/>
</dbReference>
<dbReference type="PANTHER" id="PTHR31756:SF3">
    <property type="entry name" value="PYRUVATE, PHOSPHATE DIKINASE REGULATORY PROTEIN 1, CHLOROPLASTIC"/>
    <property type="match status" value="1"/>
</dbReference>
<dbReference type="Pfam" id="PF03618">
    <property type="entry name" value="Kinase-PPPase"/>
    <property type="match status" value="1"/>
</dbReference>
<protein>
    <recommendedName>
        <fullName evidence="1">Putative pyruvate, phosphate dikinase regulatory protein</fullName>
        <shortName evidence="1">PPDK regulatory protein</shortName>
        <ecNumber evidence="1">2.7.11.32</ecNumber>
        <ecNumber evidence="1">2.7.4.27</ecNumber>
    </recommendedName>
</protein>
<keyword id="KW-0418">Kinase</keyword>
<keyword id="KW-0547">Nucleotide-binding</keyword>
<keyword id="KW-1185">Reference proteome</keyword>
<keyword id="KW-0723">Serine/threonine-protein kinase</keyword>
<keyword id="KW-0808">Transferase</keyword>
<feature type="chain" id="PRO_1000149716" description="Putative pyruvate, phosphate dikinase regulatory protein">
    <location>
        <begin position="1"/>
        <end position="276"/>
    </location>
</feature>
<feature type="binding site" evidence="1">
    <location>
        <begin position="152"/>
        <end position="159"/>
    </location>
    <ligand>
        <name>ADP</name>
        <dbReference type="ChEBI" id="CHEBI:456216"/>
    </ligand>
</feature>
<gene>
    <name type="ordered locus">Sca_1185</name>
</gene>